<sequence length="220" mass="24376">MAQKPKRTKSGSAWMHEHVTDAYVKKAQQDGFRSRAAYKLLEIDSRDHLLHPGMTVVDLGAAPGSWCQVAVQKMKRQGRVLAIDLLPVAPLPGVEALQGDFTAPDTLAWLENTLQAARVDLVLSDMAPNMSGVMLRDQARHYELCELALDFAVNWLKPDGAFLVKVFQGSGFEDFRNAMRRAFDQVVIRKPDASRDRSSEVYLLGRRPVKLESVAATGAS</sequence>
<gene>
    <name evidence="1" type="primary">rlmE</name>
    <name evidence="1" type="synonym">ftsJ</name>
    <name evidence="1" type="synonym">rrmJ</name>
    <name type="ordered locus">Tbd_1132</name>
</gene>
<proteinExistence type="inferred from homology"/>
<organism>
    <name type="scientific">Thiobacillus denitrificans (strain ATCC 25259 / T1)</name>
    <dbReference type="NCBI Taxonomy" id="292415"/>
    <lineage>
        <taxon>Bacteria</taxon>
        <taxon>Pseudomonadati</taxon>
        <taxon>Pseudomonadota</taxon>
        <taxon>Betaproteobacteria</taxon>
        <taxon>Nitrosomonadales</taxon>
        <taxon>Thiobacillaceae</taxon>
        <taxon>Thiobacillus</taxon>
    </lineage>
</organism>
<name>RLME_THIDA</name>
<dbReference type="EC" id="2.1.1.166" evidence="1"/>
<dbReference type="EMBL" id="CP000116">
    <property type="protein sequence ID" value="AAZ97085.1"/>
    <property type="molecule type" value="Genomic_DNA"/>
</dbReference>
<dbReference type="RefSeq" id="WP_011311644.1">
    <property type="nucleotide sequence ID" value="NC_007404.1"/>
</dbReference>
<dbReference type="SMR" id="Q3SJR5"/>
<dbReference type="STRING" id="292415.Tbd_1132"/>
<dbReference type="KEGG" id="tbd:Tbd_1132"/>
<dbReference type="eggNOG" id="COG0293">
    <property type="taxonomic scope" value="Bacteria"/>
</dbReference>
<dbReference type="HOGENOM" id="CLU_009422_4_0_4"/>
<dbReference type="OrthoDB" id="9790080at2"/>
<dbReference type="Proteomes" id="UP000008291">
    <property type="component" value="Chromosome"/>
</dbReference>
<dbReference type="GO" id="GO:0005737">
    <property type="term" value="C:cytoplasm"/>
    <property type="evidence" value="ECO:0007669"/>
    <property type="project" value="UniProtKB-SubCell"/>
</dbReference>
<dbReference type="GO" id="GO:0008650">
    <property type="term" value="F:rRNA (uridine-2'-O-)-methyltransferase activity"/>
    <property type="evidence" value="ECO:0007669"/>
    <property type="project" value="UniProtKB-UniRule"/>
</dbReference>
<dbReference type="FunFam" id="3.40.50.150:FF:000005">
    <property type="entry name" value="Ribosomal RNA large subunit methyltransferase E"/>
    <property type="match status" value="1"/>
</dbReference>
<dbReference type="Gene3D" id="3.40.50.150">
    <property type="entry name" value="Vaccinia Virus protein VP39"/>
    <property type="match status" value="1"/>
</dbReference>
<dbReference type="HAMAP" id="MF_01547">
    <property type="entry name" value="RNA_methyltr_E"/>
    <property type="match status" value="1"/>
</dbReference>
<dbReference type="InterPro" id="IPR050082">
    <property type="entry name" value="RNA_methyltr_RlmE"/>
</dbReference>
<dbReference type="InterPro" id="IPR002877">
    <property type="entry name" value="RNA_MeTrfase_FtsJ_dom"/>
</dbReference>
<dbReference type="InterPro" id="IPR015507">
    <property type="entry name" value="rRNA-MeTfrase_E"/>
</dbReference>
<dbReference type="InterPro" id="IPR029063">
    <property type="entry name" value="SAM-dependent_MTases_sf"/>
</dbReference>
<dbReference type="PANTHER" id="PTHR10920">
    <property type="entry name" value="RIBOSOMAL RNA METHYLTRANSFERASE"/>
    <property type="match status" value="1"/>
</dbReference>
<dbReference type="PANTHER" id="PTHR10920:SF18">
    <property type="entry name" value="RRNA METHYLTRANSFERASE 2, MITOCHONDRIAL"/>
    <property type="match status" value="1"/>
</dbReference>
<dbReference type="Pfam" id="PF01728">
    <property type="entry name" value="FtsJ"/>
    <property type="match status" value="1"/>
</dbReference>
<dbReference type="PIRSF" id="PIRSF005461">
    <property type="entry name" value="23S_rRNA_mtase"/>
    <property type="match status" value="1"/>
</dbReference>
<dbReference type="SUPFAM" id="SSF53335">
    <property type="entry name" value="S-adenosyl-L-methionine-dependent methyltransferases"/>
    <property type="match status" value="1"/>
</dbReference>
<comment type="function">
    <text evidence="1">Specifically methylates the uridine in position 2552 of 23S rRNA at the 2'-O position of the ribose in the fully assembled 50S ribosomal subunit.</text>
</comment>
<comment type="catalytic activity">
    <reaction evidence="1">
        <text>uridine(2552) in 23S rRNA + S-adenosyl-L-methionine = 2'-O-methyluridine(2552) in 23S rRNA + S-adenosyl-L-homocysteine + H(+)</text>
        <dbReference type="Rhea" id="RHEA:42720"/>
        <dbReference type="Rhea" id="RHEA-COMP:10202"/>
        <dbReference type="Rhea" id="RHEA-COMP:10203"/>
        <dbReference type="ChEBI" id="CHEBI:15378"/>
        <dbReference type="ChEBI" id="CHEBI:57856"/>
        <dbReference type="ChEBI" id="CHEBI:59789"/>
        <dbReference type="ChEBI" id="CHEBI:65315"/>
        <dbReference type="ChEBI" id="CHEBI:74478"/>
        <dbReference type="EC" id="2.1.1.166"/>
    </reaction>
</comment>
<comment type="subcellular location">
    <subcellularLocation>
        <location evidence="1">Cytoplasm</location>
    </subcellularLocation>
</comment>
<comment type="similarity">
    <text evidence="1">Belongs to the class I-like SAM-binding methyltransferase superfamily. RNA methyltransferase RlmE family.</text>
</comment>
<keyword id="KW-0963">Cytoplasm</keyword>
<keyword id="KW-0489">Methyltransferase</keyword>
<keyword id="KW-1185">Reference proteome</keyword>
<keyword id="KW-0698">rRNA processing</keyword>
<keyword id="KW-0949">S-adenosyl-L-methionine</keyword>
<keyword id="KW-0808">Transferase</keyword>
<evidence type="ECO:0000255" key="1">
    <source>
        <dbReference type="HAMAP-Rule" id="MF_01547"/>
    </source>
</evidence>
<reference key="1">
    <citation type="journal article" date="2006" name="J. Bacteriol.">
        <title>The genome sequence of the obligately chemolithoautotrophic, facultatively anaerobic bacterium Thiobacillus denitrificans.</title>
        <authorList>
            <person name="Beller H.R."/>
            <person name="Chain P.S."/>
            <person name="Letain T.E."/>
            <person name="Chakicherla A."/>
            <person name="Larimer F.W."/>
            <person name="Richardson P.M."/>
            <person name="Coleman M.A."/>
            <person name="Wood A.P."/>
            <person name="Kelly D.P."/>
        </authorList>
    </citation>
    <scope>NUCLEOTIDE SEQUENCE [LARGE SCALE GENOMIC DNA]</scope>
    <source>
        <strain>ATCC 25259 / T1</strain>
    </source>
</reference>
<accession>Q3SJR5</accession>
<protein>
    <recommendedName>
        <fullName evidence="1">Ribosomal RNA large subunit methyltransferase E</fullName>
        <ecNumber evidence="1">2.1.1.166</ecNumber>
    </recommendedName>
    <alternativeName>
        <fullName evidence="1">23S rRNA Um2552 methyltransferase</fullName>
    </alternativeName>
    <alternativeName>
        <fullName evidence="1">rRNA (uridine-2'-O-)-methyltransferase</fullName>
    </alternativeName>
</protein>
<feature type="chain" id="PRO_0000282809" description="Ribosomal RNA large subunit methyltransferase E">
    <location>
        <begin position="1"/>
        <end position="220"/>
    </location>
</feature>
<feature type="active site" description="Proton acceptor" evidence="1">
    <location>
        <position position="165"/>
    </location>
</feature>
<feature type="binding site" evidence="1">
    <location>
        <position position="64"/>
    </location>
    <ligand>
        <name>S-adenosyl-L-methionine</name>
        <dbReference type="ChEBI" id="CHEBI:59789"/>
    </ligand>
</feature>
<feature type="binding site" evidence="1">
    <location>
        <position position="66"/>
    </location>
    <ligand>
        <name>S-adenosyl-L-methionine</name>
        <dbReference type="ChEBI" id="CHEBI:59789"/>
    </ligand>
</feature>
<feature type="binding site" evidence="1">
    <location>
        <position position="84"/>
    </location>
    <ligand>
        <name>S-adenosyl-L-methionine</name>
        <dbReference type="ChEBI" id="CHEBI:59789"/>
    </ligand>
</feature>
<feature type="binding site" evidence="1">
    <location>
        <position position="100"/>
    </location>
    <ligand>
        <name>S-adenosyl-L-methionine</name>
        <dbReference type="ChEBI" id="CHEBI:59789"/>
    </ligand>
</feature>
<feature type="binding site" evidence="1">
    <location>
        <position position="125"/>
    </location>
    <ligand>
        <name>S-adenosyl-L-methionine</name>
        <dbReference type="ChEBI" id="CHEBI:59789"/>
    </ligand>
</feature>